<accession>P44304</accession>
<proteinExistence type="inferred from homology"/>
<reference key="1">
    <citation type="journal article" date="1995" name="Science">
        <title>Whole-genome random sequencing and assembly of Haemophilus influenzae Rd.</title>
        <authorList>
            <person name="Fleischmann R.D."/>
            <person name="Adams M.D."/>
            <person name="White O."/>
            <person name="Clayton R.A."/>
            <person name="Kirkness E.F."/>
            <person name="Kerlavage A.R."/>
            <person name="Bult C.J."/>
            <person name="Tomb J.-F."/>
            <person name="Dougherty B.A."/>
            <person name="Merrick J.M."/>
            <person name="McKenney K."/>
            <person name="Sutton G.G."/>
            <person name="FitzHugh W."/>
            <person name="Fields C.A."/>
            <person name="Gocayne J.D."/>
            <person name="Scott J.D."/>
            <person name="Shirley R."/>
            <person name="Liu L.-I."/>
            <person name="Glodek A."/>
            <person name="Kelley J.M."/>
            <person name="Weidman J.F."/>
            <person name="Phillips C.A."/>
            <person name="Spriggs T."/>
            <person name="Hedblom E."/>
            <person name="Cotton M.D."/>
            <person name="Utterback T.R."/>
            <person name="Hanna M.C."/>
            <person name="Nguyen D.T."/>
            <person name="Saudek D.M."/>
            <person name="Brandon R.C."/>
            <person name="Fine L.D."/>
            <person name="Fritchman J.L."/>
            <person name="Fuhrmann J.L."/>
            <person name="Geoghagen N.S.M."/>
            <person name="Gnehm C.L."/>
            <person name="McDonald L.A."/>
            <person name="Small K.V."/>
            <person name="Fraser C.M."/>
            <person name="Smith H.O."/>
            <person name="Venter J.C."/>
        </authorList>
    </citation>
    <scope>NUCLEOTIDE SEQUENCE [LARGE SCALE GENOMIC DNA]</scope>
    <source>
        <strain>ATCC 51907 / DSM 11121 / KW20 / Rd</strain>
    </source>
</reference>
<name>G3P_HAEIN</name>
<sequence>MAIKIGINGFGRIGRIVFRAAQHRDDIEVVGINDLIDVEYMAYMLKYDSTHGRFDGTVEVKDGNLVVNGKTIRVTAERDPANLNWGAIGVDIAVEATGLFLTDETARKHITAGAKKVVLTGPSKDATPMFVRGVNFNAYAGQDIVSNASCTTNCLAPLARVVHETFGIKDGLMTTVHATTATQKTVDGPSAKDWRGGRGASQNIIPSSTGAAKAVGKVLPALNGKLTGMAFRVPTPNVSVVDLTVNLEKPASYDAIKQAIKDAAEGKTFNGELKGVLGYTEDAVVSTDFNGCALTSVFDADAGIALTDSFVKLVSWYDNETGYSNKVLDLVAHIYNYKG</sequence>
<evidence type="ECO:0000250" key="1">
    <source>
        <dbReference type="UniProtKB" id="P00362"/>
    </source>
</evidence>
<evidence type="ECO:0000250" key="2">
    <source>
        <dbReference type="UniProtKB" id="P0A9B2"/>
    </source>
</evidence>
<evidence type="ECO:0000305" key="3"/>
<comment type="function">
    <text evidence="2">Catalyzes the oxidative phosphorylation of glyceraldehyde 3-phosphate (G3P) to 1,3-bisphosphoglycerate (BPG) using the cofactor NAD. The first reaction step involves the formation of a hemiacetal intermediate between G3P and a cysteine residue, and this hemiacetal intermediate is then oxidized to a thioester, with concomitant reduction of NAD to NADH. The reduced NADH is then exchanged with the second NAD, and the thioester is attacked by a nucleophilic inorganic phosphate to produce BPG.</text>
</comment>
<comment type="catalytic activity">
    <reaction evidence="2">
        <text>D-glyceraldehyde 3-phosphate + phosphate + NAD(+) = (2R)-3-phospho-glyceroyl phosphate + NADH + H(+)</text>
        <dbReference type="Rhea" id="RHEA:10300"/>
        <dbReference type="ChEBI" id="CHEBI:15378"/>
        <dbReference type="ChEBI" id="CHEBI:43474"/>
        <dbReference type="ChEBI" id="CHEBI:57540"/>
        <dbReference type="ChEBI" id="CHEBI:57604"/>
        <dbReference type="ChEBI" id="CHEBI:57945"/>
        <dbReference type="ChEBI" id="CHEBI:59776"/>
        <dbReference type="EC" id="1.2.1.12"/>
    </reaction>
</comment>
<comment type="pathway">
    <text evidence="3">Carbohydrate degradation; glycolysis; pyruvate from D-glyceraldehyde 3-phosphate: step 1/5.</text>
</comment>
<comment type="subunit">
    <text evidence="2">Homotetramer.</text>
</comment>
<comment type="subcellular location">
    <subcellularLocation>
        <location evidence="3">Cytoplasm</location>
    </subcellularLocation>
</comment>
<comment type="similarity">
    <text evidence="3">Belongs to the glyceraldehyde-3-phosphate dehydrogenase family.</text>
</comment>
<protein>
    <recommendedName>
        <fullName evidence="2">Glyceraldehyde-3-phosphate dehydrogenase</fullName>
        <shortName evidence="2">GAPDH</shortName>
        <ecNumber evidence="2">1.2.1.12</ecNumber>
    </recommendedName>
    <alternativeName>
        <fullName evidence="2">NAD-dependent glyceraldehyde-3-phosphate dehydrogenase</fullName>
    </alternativeName>
</protein>
<gene>
    <name type="primary">gapA</name>
    <name type="synonym">gapDH</name>
    <name type="ordered locus">HI_0001</name>
</gene>
<keyword id="KW-0963">Cytoplasm</keyword>
<keyword id="KW-0324">Glycolysis</keyword>
<keyword id="KW-0520">NAD</keyword>
<keyword id="KW-0547">Nucleotide-binding</keyword>
<keyword id="KW-0560">Oxidoreductase</keyword>
<keyword id="KW-1185">Reference proteome</keyword>
<dbReference type="EC" id="1.2.1.12" evidence="2"/>
<dbReference type="EMBL" id="L42023">
    <property type="protein sequence ID" value="AAC21680.1"/>
    <property type="molecule type" value="Genomic_DNA"/>
</dbReference>
<dbReference type="PIR" id="G64041">
    <property type="entry name" value="G64041"/>
</dbReference>
<dbReference type="RefSeq" id="NP_438174.1">
    <property type="nucleotide sequence ID" value="NC_000907.1"/>
</dbReference>
<dbReference type="SMR" id="P44304"/>
<dbReference type="STRING" id="71421.HI_0001"/>
<dbReference type="EnsemblBacteria" id="AAC21680">
    <property type="protein sequence ID" value="AAC21680"/>
    <property type="gene ID" value="HI_0001"/>
</dbReference>
<dbReference type="KEGG" id="hin:HI_0001"/>
<dbReference type="PATRIC" id="fig|71421.8.peg.1"/>
<dbReference type="eggNOG" id="COG0057">
    <property type="taxonomic scope" value="Bacteria"/>
</dbReference>
<dbReference type="HOGENOM" id="CLU_030140_0_3_6"/>
<dbReference type="OrthoDB" id="9803304at2"/>
<dbReference type="PhylomeDB" id="P44304"/>
<dbReference type="BioCyc" id="HINF71421:G1GJ1-1-MONOMER"/>
<dbReference type="UniPathway" id="UPA00109">
    <property type="reaction ID" value="UER00184"/>
</dbReference>
<dbReference type="Proteomes" id="UP000000579">
    <property type="component" value="Chromosome"/>
</dbReference>
<dbReference type="GO" id="GO:0005737">
    <property type="term" value="C:cytoplasm"/>
    <property type="evidence" value="ECO:0007669"/>
    <property type="project" value="UniProtKB-SubCell"/>
</dbReference>
<dbReference type="GO" id="GO:0004365">
    <property type="term" value="F:glyceraldehyde-3-phosphate dehydrogenase (NAD+) (phosphorylating) activity"/>
    <property type="evidence" value="ECO:0000250"/>
    <property type="project" value="UniProtKB"/>
</dbReference>
<dbReference type="GO" id="GO:0051287">
    <property type="term" value="F:NAD binding"/>
    <property type="evidence" value="ECO:0000250"/>
    <property type="project" value="UniProtKB"/>
</dbReference>
<dbReference type="GO" id="GO:0050661">
    <property type="term" value="F:NADP binding"/>
    <property type="evidence" value="ECO:0007669"/>
    <property type="project" value="InterPro"/>
</dbReference>
<dbReference type="GO" id="GO:0006006">
    <property type="term" value="P:glucose metabolic process"/>
    <property type="evidence" value="ECO:0007669"/>
    <property type="project" value="InterPro"/>
</dbReference>
<dbReference type="GO" id="GO:0006096">
    <property type="term" value="P:glycolytic process"/>
    <property type="evidence" value="ECO:0007669"/>
    <property type="project" value="UniProtKB-UniPathway"/>
</dbReference>
<dbReference type="CDD" id="cd18126">
    <property type="entry name" value="GAPDH_I_C"/>
    <property type="match status" value="1"/>
</dbReference>
<dbReference type="CDD" id="cd05214">
    <property type="entry name" value="GAPDH_I_N"/>
    <property type="match status" value="1"/>
</dbReference>
<dbReference type="FunFam" id="3.30.360.10:FF:000001">
    <property type="entry name" value="Glyceraldehyde-3-phosphate dehydrogenase"/>
    <property type="match status" value="1"/>
</dbReference>
<dbReference type="FunFam" id="3.40.50.720:FF:000001">
    <property type="entry name" value="Glyceraldehyde-3-phosphate dehydrogenase"/>
    <property type="match status" value="1"/>
</dbReference>
<dbReference type="Gene3D" id="3.30.360.10">
    <property type="entry name" value="Dihydrodipicolinate Reductase, domain 2"/>
    <property type="match status" value="1"/>
</dbReference>
<dbReference type="Gene3D" id="3.40.50.720">
    <property type="entry name" value="NAD(P)-binding Rossmann-like Domain"/>
    <property type="match status" value="1"/>
</dbReference>
<dbReference type="InterPro" id="IPR020831">
    <property type="entry name" value="GlycerAld/Erythrose_P_DH"/>
</dbReference>
<dbReference type="InterPro" id="IPR020830">
    <property type="entry name" value="GlycerAld_3-P_DH_AS"/>
</dbReference>
<dbReference type="InterPro" id="IPR020829">
    <property type="entry name" value="GlycerAld_3-P_DH_cat"/>
</dbReference>
<dbReference type="InterPro" id="IPR020828">
    <property type="entry name" value="GlycerAld_3-P_DH_NAD(P)-bd"/>
</dbReference>
<dbReference type="InterPro" id="IPR006424">
    <property type="entry name" value="Glyceraldehyde-3-P_DH_1"/>
</dbReference>
<dbReference type="InterPro" id="IPR036291">
    <property type="entry name" value="NAD(P)-bd_dom_sf"/>
</dbReference>
<dbReference type="NCBIfam" id="TIGR01534">
    <property type="entry name" value="GAPDH-I"/>
    <property type="match status" value="1"/>
</dbReference>
<dbReference type="PANTHER" id="PTHR10836">
    <property type="entry name" value="GLYCERALDEHYDE 3-PHOSPHATE DEHYDROGENASE"/>
    <property type="match status" value="1"/>
</dbReference>
<dbReference type="PANTHER" id="PTHR10836:SF76">
    <property type="entry name" value="GLYCERALDEHYDE-3-PHOSPHATE DEHYDROGENASE-RELATED"/>
    <property type="match status" value="1"/>
</dbReference>
<dbReference type="Pfam" id="PF02800">
    <property type="entry name" value="Gp_dh_C"/>
    <property type="match status" value="1"/>
</dbReference>
<dbReference type="Pfam" id="PF00044">
    <property type="entry name" value="Gp_dh_N"/>
    <property type="match status" value="1"/>
</dbReference>
<dbReference type="PIRSF" id="PIRSF000149">
    <property type="entry name" value="GAP_DH"/>
    <property type="match status" value="1"/>
</dbReference>
<dbReference type="PRINTS" id="PR00078">
    <property type="entry name" value="G3PDHDRGNASE"/>
</dbReference>
<dbReference type="SMART" id="SM00846">
    <property type="entry name" value="Gp_dh_N"/>
    <property type="match status" value="1"/>
</dbReference>
<dbReference type="SUPFAM" id="SSF55347">
    <property type="entry name" value="Glyceraldehyde-3-phosphate dehydrogenase-like, C-terminal domain"/>
    <property type="match status" value="1"/>
</dbReference>
<dbReference type="SUPFAM" id="SSF51735">
    <property type="entry name" value="NAD(P)-binding Rossmann-fold domains"/>
    <property type="match status" value="1"/>
</dbReference>
<dbReference type="PROSITE" id="PS00071">
    <property type="entry name" value="GAPDH"/>
    <property type="match status" value="1"/>
</dbReference>
<feature type="chain" id="PRO_0000145661" description="Glyceraldehyde-3-phosphate dehydrogenase">
    <location>
        <begin position="1"/>
        <end position="339"/>
    </location>
</feature>
<feature type="active site" description="Nucleophile" evidence="2">
    <location>
        <position position="150"/>
    </location>
</feature>
<feature type="binding site" evidence="1">
    <location>
        <begin position="12"/>
        <end position="13"/>
    </location>
    <ligand>
        <name>NAD(+)</name>
        <dbReference type="ChEBI" id="CHEBI:57540"/>
    </ligand>
</feature>
<feature type="binding site" evidence="2">
    <location>
        <position position="34"/>
    </location>
    <ligand>
        <name>NAD(+)</name>
        <dbReference type="ChEBI" id="CHEBI:57540"/>
    </ligand>
</feature>
<feature type="binding site" evidence="2">
    <location>
        <position position="78"/>
    </location>
    <ligand>
        <name>NAD(+)</name>
        <dbReference type="ChEBI" id="CHEBI:57540"/>
    </ligand>
</feature>
<feature type="binding site" evidence="2">
    <location>
        <position position="120"/>
    </location>
    <ligand>
        <name>NAD(+)</name>
        <dbReference type="ChEBI" id="CHEBI:57540"/>
    </ligand>
</feature>
<feature type="binding site" evidence="2">
    <location>
        <begin position="149"/>
        <end position="151"/>
    </location>
    <ligand>
        <name>D-glyceraldehyde 3-phosphate</name>
        <dbReference type="ChEBI" id="CHEBI:59776"/>
    </ligand>
</feature>
<feature type="binding site" evidence="2">
    <location>
        <position position="180"/>
    </location>
    <ligand>
        <name>D-glyceraldehyde 3-phosphate</name>
        <dbReference type="ChEBI" id="CHEBI:59776"/>
    </ligand>
</feature>
<feature type="binding site" evidence="2">
    <location>
        <begin position="209"/>
        <end position="210"/>
    </location>
    <ligand>
        <name>D-glyceraldehyde 3-phosphate</name>
        <dbReference type="ChEBI" id="CHEBI:59776"/>
    </ligand>
</feature>
<feature type="binding site" evidence="2">
    <location>
        <position position="232"/>
    </location>
    <ligand>
        <name>D-glyceraldehyde 3-phosphate</name>
        <dbReference type="ChEBI" id="CHEBI:59776"/>
    </ligand>
</feature>
<feature type="binding site" evidence="2">
    <location>
        <position position="319"/>
    </location>
    <ligand>
        <name>NAD(+)</name>
        <dbReference type="ChEBI" id="CHEBI:57540"/>
    </ligand>
</feature>
<feature type="site" description="Activates thiol group during catalysis" evidence="2">
    <location>
        <position position="177"/>
    </location>
</feature>
<organism>
    <name type="scientific">Haemophilus influenzae (strain ATCC 51907 / DSM 11121 / KW20 / Rd)</name>
    <dbReference type="NCBI Taxonomy" id="71421"/>
    <lineage>
        <taxon>Bacteria</taxon>
        <taxon>Pseudomonadati</taxon>
        <taxon>Pseudomonadota</taxon>
        <taxon>Gammaproteobacteria</taxon>
        <taxon>Pasteurellales</taxon>
        <taxon>Pasteurellaceae</taxon>
        <taxon>Haemophilus</taxon>
    </lineage>
</organism>